<name>ION3_CARAU</name>
<comment type="function">
    <text>One of the non-neuronal predominant intermediate filament proteins of the visual pathway.</text>
</comment>
<comment type="similarity">
    <text evidence="1">Belongs to the intermediate filament family.</text>
</comment>
<feature type="chain" id="PRO_0000063750" description="Intermediate filament protein ON3">
    <location>
        <begin position="1"/>
        <end position="520"/>
    </location>
</feature>
<feature type="domain" description="IF rod" evidence="1">
    <location>
        <begin position="109"/>
        <end position="420"/>
    </location>
</feature>
<feature type="region of interest" description="Head">
    <location>
        <begin position="1"/>
        <end position="108"/>
    </location>
</feature>
<feature type="region of interest" description="Disordered" evidence="2">
    <location>
        <begin position="1"/>
        <end position="33"/>
    </location>
</feature>
<feature type="region of interest" description="Coil 1A">
    <location>
        <begin position="109"/>
        <end position="144"/>
    </location>
</feature>
<feature type="region of interest" description="Linker 1">
    <location>
        <begin position="145"/>
        <end position="157"/>
    </location>
</feature>
<feature type="region of interest" description="Coil 1B">
    <location>
        <begin position="158"/>
        <end position="253"/>
    </location>
</feature>
<feature type="region of interest" description="Linker 12">
    <location>
        <begin position="254"/>
        <end position="273"/>
    </location>
</feature>
<feature type="region of interest" description="Coil 2">
    <location>
        <begin position="274"/>
        <end position="420"/>
    </location>
</feature>
<feature type="region of interest" description="Tail">
    <location>
        <begin position="421"/>
        <end position="520"/>
    </location>
</feature>
<feature type="compositionally biased region" description="Low complexity" evidence="2">
    <location>
        <begin position="1"/>
        <end position="27"/>
    </location>
</feature>
<accession>P18520</accession>
<protein>
    <recommendedName>
        <fullName>Intermediate filament protein ON3</fullName>
    </recommendedName>
</protein>
<proteinExistence type="evidence at transcript level"/>
<reference key="1">
    <citation type="journal article" date="1989" name="Neuron">
        <title>A type II keratin is expressed in glial cells of the goldfish visual pathway.</title>
        <authorList>
            <person name="Giordano S."/>
            <person name="Glasgow E."/>
            <person name="Tesser P."/>
            <person name="Schechter N."/>
        </authorList>
    </citation>
    <scope>NUCLEOTIDE SEQUENCE [MRNA]</scope>
    <source>
        <tissue>Glial cell</tissue>
    </source>
</reference>
<sequence length="520" mass="57789">MSYTKKTSYSVKSSSSGSVPRSFSSMSYSGPSVTRQSYSVRTSYGGANRGMGAGMGGGGFISSSSAYGLGMGMGSGVVAPIQAVTFNKSLLAPLNLEIDPNIQVVRTQEKEQMKSLNNRFASFIDKVRFLEQQNKMLETKWSLLQNQTATRSNIDAMFEAYINNLRRQLDSLGNDKMKLEADLHNMQGLVEDFKNKYEDEINKRTECENDFVLIKKDVDEAYMNKVELEAKLESLSDEINFLRQIFEEEIRELQSQIKDTSVVVEMDNSRNLDMDAIVAEVRAQYEDIANRSRAEAEMWYKSKYEEMQTSATKYGDDLRSTKTEIADLNRMIQRLQSEIDAVKGQRSNLENQIAEAEERGELAVRDAKARIKDLEDALQRAKQDMARQIREYQELMNVKLALDIEIATYRKLLEGEEDRLLSGIKSVNISKQSTSYGSYPMESASSGYSNYSSGYGGGYGGGYSSGGGYSSGGGYSSGGGYSSGSGYSETVSQTKKSVVIKMIETKDGRVVSESSEVVQD</sequence>
<organism>
    <name type="scientific">Carassius auratus</name>
    <name type="common">Goldfish</name>
    <dbReference type="NCBI Taxonomy" id="7957"/>
    <lineage>
        <taxon>Eukaryota</taxon>
        <taxon>Metazoa</taxon>
        <taxon>Chordata</taxon>
        <taxon>Craniata</taxon>
        <taxon>Vertebrata</taxon>
        <taxon>Euteleostomi</taxon>
        <taxon>Actinopterygii</taxon>
        <taxon>Neopterygii</taxon>
        <taxon>Teleostei</taxon>
        <taxon>Ostariophysi</taxon>
        <taxon>Cypriniformes</taxon>
        <taxon>Cyprinidae</taxon>
        <taxon>Cyprininae</taxon>
        <taxon>Carassius</taxon>
    </lineage>
</organism>
<keyword id="KW-0175">Coiled coil</keyword>
<keyword id="KW-0403">Intermediate filament</keyword>
<keyword id="KW-1185">Reference proteome</keyword>
<keyword id="KW-0716">Sensory transduction</keyword>
<keyword id="KW-0844">Vision</keyword>
<evidence type="ECO:0000255" key="1">
    <source>
        <dbReference type="PROSITE-ProRule" id="PRU01188"/>
    </source>
</evidence>
<evidence type="ECO:0000256" key="2">
    <source>
        <dbReference type="SAM" id="MobiDB-lite"/>
    </source>
</evidence>
<dbReference type="EMBL" id="M87773">
    <property type="status" value="NOT_ANNOTATED_CDS"/>
    <property type="molecule type" value="mRNA"/>
</dbReference>
<dbReference type="PIR" id="JS0291">
    <property type="entry name" value="JS0291"/>
</dbReference>
<dbReference type="SMR" id="P18520"/>
<dbReference type="Proteomes" id="UP000515129">
    <property type="component" value="Unplaced"/>
</dbReference>
<dbReference type="GO" id="GO:0005615">
    <property type="term" value="C:extracellular space"/>
    <property type="evidence" value="ECO:0007669"/>
    <property type="project" value="TreeGrafter"/>
</dbReference>
<dbReference type="GO" id="GO:0045095">
    <property type="term" value="C:keratin filament"/>
    <property type="evidence" value="ECO:0007669"/>
    <property type="project" value="InterPro"/>
</dbReference>
<dbReference type="GO" id="GO:0030280">
    <property type="term" value="F:structural constituent of skin epidermis"/>
    <property type="evidence" value="ECO:0007669"/>
    <property type="project" value="TreeGrafter"/>
</dbReference>
<dbReference type="GO" id="GO:0045109">
    <property type="term" value="P:intermediate filament organization"/>
    <property type="evidence" value="ECO:0007669"/>
    <property type="project" value="TreeGrafter"/>
</dbReference>
<dbReference type="GO" id="GO:0031424">
    <property type="term" value="P:keratinization"/>
    <property type="evidence" value="ECO:0007669"/>
    <property type="project" value="TreeGrafter"/>
</dbReference>
<dbReference type="GO" id="GO:0007601">
    <property type="term" value="P:visual perception"/>
    <property type="evidence" value="ECO:0007669"/>
    <property type="project" value="UniProtKB-KW"/>
</dbReference>
<dbReference type="FunFam" id="1.20.5.1160:FF:000001">
    <property type="entry name" value="Keratin type II"/>
    <property type="match status" value="1"/>
</dbReference>
<dbReference type="FunFam" id="1.20.5.170:FF:000004">
    <property type="entry name" value="Keratin, type II cytoskeletal 5"/>
    <property type="match status" value="1"/>
</dbReference>
<dbReference type="FunFam" id="1.20.5.500:FF:000001">
    <property type="entry name" value="Type II keratin 23"/>
    <property type="match status" value="1"/>
</dbReference>
<dbReference type="Gene3D" id="1.20.5.170">
    <property type="match status" value="1"/>
</dbReference>
<dbReference type="Gene3D" id="1.20.5.500">
    <property type="entry name" value="Single helix bin"/>
    <property type="match status" value="1"/>
</dbReference>
<dbReference type="Gene3D" id="1.20.5.1160">
    <property type="entry name" value="Vasodilator-stimulated phosphoprotein"/>
    <property type="match status" value="1"/>
</dbReference>
<dbReference type="InterPro" id="IPR018039">
    <property type="entry name" value="IF_conserved"/>
</dbReference>
<dbReference type="InterPro" id="IPR039008">
    <property type="entry name" value="IF_rod_dom"/>
</dbReference>
<dbReference type="InterPro" id="IPR032444">
    <property type="entry name" value="Keratin_2_head"/>
</dbReference>
<dbReference type="InterPro" id="IPR003054">
    <property type="entry name" value="Keratin_II"/>
</dbReference>
<dbReference type="PANTHER" id="PTHR45616">
    <property type="entry name" value="GATA-TYPE DOMAIN-CONTAINING PROTEIN"/>
    <property type="match status" value="1"/>
</dbReference>
<dbReference type="PANTHER" id="PTHR45616:SF59">
    <property type="entry name" value="KERATIN, TYPE II CYTOSKELETAL 8"/>
    <property type="match status" value="1"/>
</dbReference>
<dbReference type="Pfam" id="PF00038">
    <property type="entry name" value="Filament"/>
    <property type="match status" value="1"/>
</dbReference>
<dbReference type="Pfam" id="PF16208">
    <property type="entry name" value="Keratin_2_head"/>
    <property type="match status" value="1"/>
</dbReference>
<dbReference type="PRINTS" id="PR01276">
    <property type="entry name" value="TYPE2KERATIN"/>
</dbReference>
<dbReference type="SMART" id="SM01391">
    <property type="entry name" value="Filament"/>
    <property type="match status" value="1"/>
</dbReference>
<dbReference type="SUPFAM" id="SSF64593">
    <property type="entry name" value="Intermediate filament protein, coiled coil region"/>
    <property type="match status" value="3"/>
</dbReference>
<dbReference type="PROSITE" id="PS00226">
    <property type="entry name" value="IF_ROD_1"/>
    <property type="match status" value="1"/>
</dbReference>
<dbReference type="PROSITE" id="PS51842">
    <property type="entry name" value="IF_ROD_2"/>
    <property type="match status" value="1"/>
</dbReference>